<accession>Q8S3C1</accession>
<reference key="1">
    <citation type="journal article" date="2001" name="J. Biol. Chem.">
        <title>Identification of a Delta 4 fatty acid desaturase from Thraustochytrium sp. involved in the biosynthesis of docosahexanoic acid by heterologous expression in Saccharomyces cerevisiae and Brassica juncea.</title>
        <authorList>
            <person name="Qiu X."/>
            <person name="Hong H."/>
            <person name="MacKenzie S.L."/>
        </authorList>
    </citation>
    <scope>NUCLEOTIDE SEQUENCE [MRNA]</scope>
    <scope>FUNCTION</scope>
    <scope>CATALYTIC ACTIVITY</scope>
    <source>
        <strain evidence="8">ATCC 21685</strain>
    </source>
</reference>
<protein>
    <recommendedName>
        <fullName>Acyl-lipid (8-3)-desaturase</fullName>
        <ecNumber evidence="7">1.14.19.30</ecNumber>
    </recommendedName>
    <alternativeName>
        <fullName>AN Delta(5)-fatty-acid desaturase</fullName>
    </alternativeName>
    <alternativeName>
        <fullName>Acyl-lipid 5-desaturase</fullName>
    </alternativeName>
    <alternativeName>
        <fullName evidence="5">Delta-5 fatty acid desaturase</fullName>
    </alternativeName>
</protein>
<sequence length="439" mass="49832">MGKGSEGRSAAREMTAEANGDKRKTILIEGVLYDATNFKHPGGSIINFLTEGEAGVDATQAYREFHQRSGKADKYLKSLPKLDASKVESRFSAKEQARRDAMTRDYAAFREELVAEGYFDPSIPHMIYRVVEIVALFALSFWLMSKASPTSLVLGVVMNGIAQGRCGWVMHEMGHGSFTGVIWLDDRMCEFFYGVGCGMSGHYWKNQHSKHHAAPNRLEHDVDLNTLPLVAFNERVVRKVKPGSLLALWLRVQAYLFAPVSCLLIGLGWTLYLHPRYMLRTKRHMEFVWIFARYIGWFSLMGALGYSPGTSVGMYLCSFGLGCIYIFLQFAVSHTHLPVTNPEDQLHWLEYAADHTVNISTKSWLVTWWMSNLNFQIEHHLFPTAPQFRFKEISPRVEALFKRHNLPYYDLPYTSAVSTTFANLYSVGHSVGADTKKQD</sequence>
<dbReference type="EC" id="1.14.19.30" evidence="7"/>
<dbReference type="EMBL" id="AF489588">
    <property type="protein sequence ID" value="AAM09687.1"/>
    <property type="molecule type" value="mRNA"/>
</dbReference>
<dbReference type="GO" id="GO:0016020">
    <property type="term" value="C:membrane"/>
    <property type="evidence" value="ECO:0007669"/>
    <property type="project" value="UniProtKB-SubCell"/>
</dbReference>
<dbReference type="GO" id="GO:0102866">
    <property type="term" value="F:acyl-lipid (8-3)-desaturase activity"/>
    <property type="evidence" value="ECO:0007669"/>
    <property type="project" value="UniProtKB-EC"/>
</dbReference>
<dbReference type="GO" id="GO:0046872">
    <property type="term" value="F:metal ion binding"/>
    <property type="evidence" value="ECO:0007669"/>
    <property type="project" value="UniProtKB-KW"/>
</dbReference>
<dbReference type="GO" id="GO:0016717">
    <property type="term" value="F:oxidoreductase activity, acting on paired donors, with oxidation of a pair of donors resulting in the reduction of molecular oxygen to two molecules of water"/>
    <property type="evidence" value="ECO:0000314"/>
    <property type="project" value="UniProtKB"/>
</dbReference>
<dbReference type="GO" id="GO:0042759">
    <property type="term" value="P:long-chain fatty acid biosynthetic process"/>
    <property type="evidence" value="ECO:0000314"/>
    <property type="project" value="UniProtKB"/>
</dbReference>
<dbReference type="GO" id="GO:0006636">
    <property type="term" value="P:unsaturated fatty acid biosynthetic process"/>
    <property type="evidence" value="ECO:0000314"/>
    <property type="project" value="UniProtKB"/>
</dbReference>
<dbReference type="CDD" id="cd03506">
    <property type="entry name" value="Delta6-FADS-like"/>
    <property type="match status" value="1"/>
</dbReference>
<dbReference type="Gene3D" id="3.10.120.10">
    <property type="entry name" value="Cytochrome b5-like heme/steroid binding domain"/>
    <property type="match status" value="1"/>
</dbReference>
<dbReference type="InterPro" id="IPR001199">
    <property type="entry name" value="Cyt_B5-like_heme/steroid-bd"/>
</dbReference>
<dbReference type="InterPro" id="IPR036400">
    <property type="entry name" value="Cyt_B5-like_heme/steroid_sf"/>
</dbReference>
<dbReference type="InterPro" id="IPR005804">
    <property type="entry name" value="FA_desaturase_dom"/>
</dbReference>
<dbReference type="InterPro" id="IPR012171">
    <property type="entry name" value="Fatty_acid_desaturase"/>
</dbReference>
<dbReference type="PANTHER" id="PTHR19353:SF88">
    <property type="entry name" value="DELTA(5) FATTY ACID DESATURASE FAT-4"/>
    <property type="match status" value="1"/>
</dbReference>
<dbReference type="PANTHER" id="PTHR19353">
    <property type="entry name" value="FATTY ACID DESATURASE 2"/>
    <property type="match status" value="1"/>
</dbReference>
<dbReference type="Pfam" id="PF00173">
    <property type="entry name" value="Cyt-b5"/>
    <property type="match status" value="1"/>
</dbReference>
<dbReference type="Pfam" id="PF00487">
    <property type="entry name" value="FA_desaturase"/>
    <property type="match status" value="1"/>
</dbReference>
<dbReference type="PIRSF" id="PIRSF015921">
    <property type="entry name" value="FA_sphinglp_des"/>
    <property type="match status" value="1"/>
</dbReference>
<dbReference type="SUPFAM" id="SSF55856">
    <property type="entry name" value="Cytochrome b5-like heme/steroid binding domain"/>
    <property type="match status" value="1"/>
</dbReference>
<feature type="chain" id="PRO_0000434759" description="Acyl-lipid (8-3)-desaturase">
    <location>
        <begin position="1"/>
        <end position="439"/>
    </location>
</feature>
<feature type="transmembrane region" description="Helical" evidence="2">
    <location>
        <begin position="123"/>
        <end position="143"/>
    </location>
</feature>
<feature type="transmembrane region" description="Helical" evidence="2">
    <location>
        <begin position="254"/>
        <end position="274"/>
    </location>
</feature>
<feature type="transmembrane region" description="Helical" evidence="2">
    <location>
        <begin position="287"/>
        <end position="307"/>
    </location>
</feature>
<feature type="transmembrane region" description="Helical" evidence="2">
    <location>
        <begin position="312"/>
        <end position="332"/>
    </location>
</feature>
<feature type="domain" description="Cytochrome b5 heme-binding" evidence="3">
    <location>
        <begin position="7"/>
        <end position="88"/>
    </location>
</feature>
<feature type="short sequence motif" description="Histidine box-1" evidence="6">
    <location>
        <begin position="171"/>
        <end position="175"/>
    </location>
</feature>
<feature type="short sequence motif" description="Histidine box-2" evidence="6">
    <location>
        <begin position="208"/>
        <end position="213"/>
    </location>
</feature>
<feature type="short sequence motif" description="Histidine box-3" evidence="6">
    <location>
        <begin position="376"/>
        <end position="380"/>
    </location>
</feature>
<feature type="binding site" description="axial binding residue" evidence="3">
    <location>
        <position position="40"/>
    </location>
    <ligand>
        <name>heme</name>
        <dbReference type="ChEBI" id="CHEBI:30413"/>
    </ligand>
    <ligandPart>
        <name>Fe</name>
        <dbReference type="ChEBI" id="CHEBI:18248"/>
    </ligandPart>
</feature>
<feature type="binding site" description="axial binding residue" evidence="3">
    <location>
        <position position="66"/>
    </location>
    <ligand>
        <name>heme</name>
        <dbReference type="ChEBI" id="CHEBI:30413"/>
    </ligand>
    <ligandPart>
        <name>Fe</name>
        <dbReference type="ChEBI" id="CHEBI:18248"/>
    </ligandPart>
</feature>
<gene>
    <name evidence="5" type="primary">Fad5</name>
</gene>
<proteinExistence type="evidence at protein level"/>
<comment type="function">
    <text evidence="4">Fatty acid desaturase that introduces a cis double bond at the 5-position in 20-carbon polyunsaturated fatty acids incorporated in a glycerolipid that contain a Delta(8) double bond.</text>
</comment>
<comment type="catalytic activity">
    <reaction evidence="7">
        <text>an (8Z,11Z,14Z)-icosatrienoyl-containing glycerolipid + 2 Fe(II)-[cytochrome b5] + O2 + 2 H(+) = (5Z,8Z,11Z,14Z)-eicosatetraenoyl-containing glycerolipid + 2 Fe(III)-[cytochrome b5] + 2 H2O</text>
        <dbReference type="Rhea" id="RHEA:46260"/>
        <dbReference type="Rhea" id="RHEA-COMP:10438"/>
        <dbReference type="Rhea" id="RHEA-COMP:10439"/>
        <dbReference type="ChEBI" id="CHEBI:15377"/>
        <dbReference type="ChEBI" id="CHEBI:15378"/>
        <dbReference type="ChEBI" id="CHEBI:15379"/>
        <dbReference type="ChEBI" id="CHEBI:29033"/>
        <dbReference type="ChEBI" id="CHEBI:29034"/>
        <dbReference type="ChEBI" id="CHEBI:90076"/>
        <dbReference type="ChEBI" id="CHEBI:90077"/>
        <dbReference type="EC" id="1.14.19.30"/>
    </reaction>
</comment>
<comment type="catalytic activity">
    <reaction evidence="7">
        <text>an (8Z,11Z,14Z,17Z)-eicosatetraenoyl-containing glycerolipid + 2 Fe(II)-[cytochrome b5] + O2 + 2 H(+) = a (5Z,8Z,11Z,14Z,17Z)-eicosapentaenoyl-containing glycerolipid + 2 Fe(III)-[cytochrome b5] + 2 H2O</text>
        <dbReference type="Rhea" id="RHEA:46264"/>
        <dbReference type="Rhea" id="RHEA-COMP:10438"/>
        <dbReference type="Rhea" id="RHEA-COMP:10439"/>
        <dbReference type="ChEBI" id="CHEBI:15377"/>
        <dbReference type="ChEBI" id="CHEBI:15378"/>
        <dbReference type="ChEBI" id="CHEBI:15379"/>
        <dbReference type="ChEBI" id="CHEBI:29033"/>
        <dbReference type="ChEBI" id="CHEBI:29034"/>
        <dbReference type="ChEBI" id="CHEBI:90082"/>
        <dbReference type="ChEBI" id="CHEBI:90083"/>
        <dbReference type="EC" id="1.14.19.30"/>
    </reaction>
</comment>
<comment type="cofactor">
    <cofactor evidence="1">
        <name>Fe(2+)</name>
        <dbReference type="ChEBI" id="CHEBI:29033"/>
    </cofactor>
</comment>
<comment type="subcellular location">
    <subcellularLocation>
        <location evidence="2">Membrane</location>
        <topology evidence="2">Multi-pass membrane protein</topology>
    </subcellularLocation>
</comment>
<comment type="domain">
    <text evidence="6">The cytochrome b5 heme-binding domain acts as the direct electron donor to the active site of the desaturase, and does not require an external cytochrome.</text>
</comment>
<comment type="similarity">
    <text evidence="6">Belongs to the fatty acid desaturase type 1 family.</text>
</comment>
<organism>
    <name type="scientific">Thraustochytrium sp</name>
    <dbReference type="NCBI Taxonomy" id="145168"/>
    <lineage>
        <taxon>Eukaryota</taxon>
        <taxon>Sar</taxon>
        <taxon>Stramenopiles</taxon>
        <taxon>Bigyra</taxon>
        <taxon>Labyrinthulomycetes</taxon>
        <taxon>Thraustochytrida</taxon>
        <taxon>Thraustochytriaceae</taxon>
        <taxon>Thraustochytrium</taxon>
    </lineage>
</organism>
<keyword id="KW-0249">Electron transport</keyword>
<keyword id="KW-0275">Fatty acid biosynthesis</keyword>
<keyword id="KW-0276">Fatty acid metabolism</keyword>
<keyword id="KW-0349">Heme</keyword>
<keyword id="KW-0408">Iron</keyword>
<keyword id="KW-0444">Lipid biosynthesis</keyword>
<keyword id="KW-0443">Lipid metabolism</keyword>
<keyword id="KW-0472">Membrane</keyword>
<keyword id="KW-0479">Metal-binding</keyword>
<keyword id="KW-0560">Oxidoreductase</keyword>
<keyword id="KW-0812">Transmembrane</keyword>
<keyword id="KW-1133">Transmembrane helix</keyword>
<keyword id="KW-0813">Transport</keyword>
<evidence type="ECO:0000250" key="1">
    <source>
        <dbReference type="UniProtKB" id="O00767"/>
    </source>
</evidence>
<evidence type="ECO:0000255" key="2"/>
<evidence type="ECO:0000255" key="3">
    <source>
        <dbReference type="PROSITE-ProRule" id="PRU00279"/>
    </source>
</evidence>
<evidence type="ECO:0000269" key="4">
    <source>
    </source>
</evidence>
<evidence type="ECO:0000303" key="5">
    <source>
    </source>
</evidence>
<evidence type="ECO:0000305" key="6"/>
<evidence type="ECO:0000305" key="7">
    <source>
    </source>
</evidence>
<evidence type="ECO:0000312" key="8">
    <source>
        <dbReference type="EMBL" id="AAM09687.1"/>
    </source>
</evidence>
<name>D5FAD_THRSP</name>